<protein>
    <recommendedName>
        <fullName>DNA replication complex GINS protein PSF3</fullName>
    </recommendedName>
</protein>
<evidence type="ECO:0000250" key="1"/>
<evidence type="ECO:0000256" key="2">
    <source>
        <dbReference type="SAM" id="MobiDB-lite"/>
    </source>
</evidence>
<evidence type="ECO:0000305" key="3"/>
<comment type="function">
    <text evidence="1">The GINS complex plays an essential role in the initiation of DNA replication.</text>
</comment>
<comment type="subunit">
    <text evidence="1">Component of the GINS complex which is a heterotetramer of SLD5, PSF1, PSF2 and PSF3.</text>
</comment>
<comment type="subcellular location">
    <subcellularLocation>
        <location evidence="1">Nucleus</location>
    </subcellularLocation>
</comment>
<comment type="similarity">
    <text evidence="3">Belongs to the GINS3/PSF3 family.</text>
</comment>
<proteinExistence type="inferred from homology"/>
<organism>
    <name type="scientific">Chaetomium globosum (strain ATCC 6205 / CBS 148.51 / DSM 1962 / NBRC 6347 / NRRL 1970)</name>
    <name type="common">Soil fungus</name>
    <dbReference type="NCBI Taxonomy" id="306901"/>
    <lineage>
        <taxon>Eukaryota</taxon>
        <taxon>Fungi</taxon>
        <taxon>Dikarya</taxon>
        <taxon>Ascomycota</taxon>
        <taxon>Pezizomycotina</taxon>
        <taxon>Sordariomycetes</taxon>
        <taxon>Sordariomycetidae</taxon>
        <taxon>Sordariales</taxon>
        <taxon>Chaetomiaceae</taxon>
        <taxon>Chaetomium</taxon>
    </lineage>
</organism>
<name>PSF3_CHAGB</name>
<reference key="1">
    <citation type="journal article" date="2015" name="Genome Announc.">
        <title>Draft genome sequence of the cellulolytic fungus Chaetomium globosum.</title>
        <authorList>
            <person name="Cuomo C.A."/>
            <person name="Untereiner W.A."/>
            <person name="Ma L.-J."/>
            <person name="Grabherr M."/>
            <person name="Birren B.W."/>
        </authorList>
    </citation>
    <scope>NUCLEOTIDE SEQUENCE [LARGE SCALE GENOMIC DNA]</scope>
    <source>
        <strain>ATCC 6205 / CBS 148.51 / DSM 1962 / NBRC 6347 / NRRL 1970</strain>
    </source>
</reference>
<gene>
    <name type="primary">PSF3</name>
    <name type="ORF">CHGG_10099</name>
</gene>
<accession>Q2GPK5</accession>
<keyword id="KW-0235">DNA replication</keyword>
<keyword id="KW-0539">Nucleus</keyword>
<keyword id="KW-1185">Reference proteome</keyword>
<feature type="chain" id="PRO_0000278418" description="DNA replication complex GINS protein PSF3">
    <location>
        <begin position="1"/>
        <end position="207"/>
    </location>
</feature>
<feature type="region of interest" description="Disordered" evidence="2">
    <location>
        <begin position="142"/>
        <end position="171"/>
    </location>
</feature>
<dbReference type="EMBL" id="CH408035">
    <property type="protein sequence ID" value="EAQ83695.1"/>
    <property type="molecule type" value="Genomic_DNA"/>
</dbReference>
<dbReference type="RefSeq" id="XP_001228026.1">
    <property type="nucleotide sequence ID" value="XM_001228025.1"/>
</dbReference>
<dbReference type="SMR" id="Q2GPK5"/>
<dbReference type="FunCoup" id="Q2GPK5">
    <property type="interactions" value="354"/>
</dbReference>
<dbReference type="STRING" id="306901.Q2GPK5"/>
<dbReference type="GeneID" id="4396656"/>
<dbReference type="VEuPathDB" id="FungiDB:CHGG_10099"/>
<dbReference type="eggNOG" id="KOG1106">
    <property type="taxonomic scope" value="Eukaryota"/>
</dbReference>
<dbReference type="HOGENOM" id="CLU_1326230_0_0_1"/>
<dbReference type="InParanoid" id="Q2GPK5"/>
<dbReference type="OrthoDB" id="10251744at2759"/>
<dbReference type="Proteomes" id="UP000001056">
    <property type="component" value="Unassembled WGS sequence"/>
</dbReference>
<dbReference type="GO" id="GO:0000811">
    <property type="term" value="C:GINS complex"/>
    <property type="evidence" value="ECO:0007669"/>
    <property type="project" value="TreeGrafter"/>
</dbReference>
<dbReference type="GO" id="GO:1902975">
    <property type="term" value="P:mitotic DNA replication initiation"/>
    <property type="evidence" value="ECO:0007669"/>
    <property type="project" value="TreeGrafter"/>
</dbReference>
<dbReference type="CDD" id="cd11713">
    <property type="entry name" value="GINS_A_psf3"/>
    <property type="match status" value="1"/>
</dbReference>
<dbReference type="Gene3D" id="1.20.58.2050">
    <property type="match status" value="1"/>
</dbReference>
<dbReference type="InterPro" id="IPR021151">
    <property type="entry name" value="GINS_A"/>
</dbReference>
<dbReference type="InterPro" id="IPR036224">
    <property type="entry name" value="GINS_bundle-like_dom_sf"/>
</dbReference>
<dbReference type="InterPro" id="IPR010492">
    <property type="entry name" value="GINS_Psf3"/>
</dbReference>
<dbReference type="InterPro" id="IPR038437">
    <property type="entry name" value="GINS_Psf3_sf"/>
</dbReference>
<dbReference type="InterPro" id="IPR055221">
    <property type="entry name" value="PSF3_N"/>
</dbReference>
<dbReference type="PANTHER" id="PTHR22768">
    <property type="entry name" value="DNA REPLICATION COMPLEX GINS PROTEIN PSF3"/>
    <property type="match status" value="1"/>
</dbReference>
<dbReference type="PANTHER" id="PTHR22768:SF0">
    <property type="entry name" value="DNA REPLICATION COMPLEX GINS PROTEIN PSF3"/>
    <property type="match status" value="1"/>
</dbReference>
<dbReference type="Pfam" id="PF22466">
    <property type="entry name" value="PSF3_N"/>
    <property type="match status" value="1"/>
</dbReference>
<dbReference type="Pfam" id="PF05916">
    <property type="entry name" value="Sld5"/>
    <property type="match status" value="1"/>
</dbReference>
<dbReference type="SUPFAM" id="SSF158573">
    <property type="entry name" value="GINS helical bundle-like"/>
    <property type="match status" value="1"/>
</dbReference>
<dbReference type="SUPFAM" id="SSF160059">
    <property type="entry name" value="PriA/YqbF domain"/>
    <property type="match status" value="1"/>
</dbReference>
<sequence length="207" mass="22646">MSYYDIDAILTDAEPLKAGTKVNLPLWLAEMLAIANTGDVEGKSFVSFDLPPAMGNDVVQALKADPRAVPLRDHSAHFYGLAIHMMELSEEQELAAALRKTFITRASEVALHAQGPEQDATGRWISIDLIHIDLTRARRLGQLGSRPSNRGLGSASPIPEHCAPHMTKNDELRPLQPADTEVGELLLSLHIELSHPTPTMFSRSDPT</sequence>